<proteinExistence type="inferred from homology"/>
<evidence type="ECO:0000255" key="1">
    <source>
        <dbReference type="HAMAP-Rule" id="MF_01273"/>
    </source>
</evidence>
<protein>
    <recommendedName>
        <fullName evidence="1">Type II pantothenate kinase</fullName>
        <ecNumber evidence="1">2.7.1.33</ecNumber>
    </recommendedName>
    <alternativeName>
        <fullName evidence="1">PanK-II</fullName>
    </alternativeName>
    <alternativeName>
        <fullName evidence="1">Pantothenic acid kinase</fullName>
    </alternativeName>
</protein>
<sequence length="276" mass="30254">MESTIGIDAGGTLTKIAYLNEKKKLTFEKFYSNEQDKIIDWLKKQISIKQICITGGKAKQLQQLLSDSYKIVELNEFEATLVGVRYILKEEKYDINNFVLTNIGTGTSIHYIYNDRYIRAGGTGVGGGTIMGLSKLLTNIDHFEDVIPLTKVGSRKDLDITVGDIYGGILSPIDNSLTASNFGKAATIESNYNNSDILATVQGLVGEVVTALSLQFAETKNIDHIIYIGSTLCNNIHLQNIISSYTKYQNKTPIFLRDGGNSGAIGALLHATNKKS</sequence>
<feature type="chain" id="PRO_0000261341" description="Type II pantothenate kinase">
    <location>
        <begin position="1"/>
        <end position="276"/>
    </location>
</feature>
<feature type="active site" description="Proton acceptor" evidence="1">
    <location>
        <position position="76"/>
    </location>
</feature>
<feature type="binding site" evidence="1">
    <location>
        <begin position="8"/>
        <end position="15"/>
    </location>
    <ligand>
        <name>ATP</name>
        <dbReference type="ChEBI" id="CHEBI:30616"/>
    </ligand>
</feature>
<feature type="binding site" evidence="1">
    <location>
        <position position="105"/>
    </location>
    <ligand>
        <name>ATP</name>
        <dbReference type="ChEBI" id="CHEBI:30616"/>
    </ligand>
</feature>
<feature type="binding site" evidence="1">
    <location>
        <begin position="127"/>
        <end position="131"/>
    </location>
    <ligand>
        <name>ATP</name>
        <dbReference type="ChEBI" id="CHEBI:30616"/>
    </ligand>
</feature>
<feature type="binding site" evidence="1">
    <location>
        <position position="143"/>
    </location>
    <ligand>
        <name>ATP</name>
        <dbReference type="ChEBI" id="CHEBI:30616"/>
    </ligand>
</feature>
<feature type="binding site" evidence="1">
    <location>
        <position position="230"/>
    </location>
    <ligand>
        <name>ATP</name>
        <dbReference type="ChEBI" id="CHEBI:30616"/>
    </ligand>
</feature>
<gene>
    <name evidence="1" type="primary">coaW</name>
    <name type="ordered locus">BT9727_2652</name>
</gene>
<comment type="function">
    <text evidence="1">Catalyzes the phosphorylation of pantothenate (Pan), the first step in CoA biosynthesis.</text>
</comment>
<comment type="catalytic activity">
    <reaction evidence="1">
        <text>(R)-pantothenate + ATP = (R)-4'-phosphopantothenate + ADP + H(+)</text>
        <dbReference type="Rhea" id="RHEA:16373"/>
        <dbReference type="ChEBI" id="CHEBI:10986"/>
        <dbReference type="ChEBI" id="CHEBI:15378"/>
        <dbReference type="ChEBI" id="CHEBI:29032"/>
        <dbReference type="ChEBI" id="CHEBI:30616"/>
        <dbReference type="ChEBI" id="CHEBI:456216"/>
        <dbReference type="EC" id="2.7.1.33"/>
    </reaction>
</comment>
<comment type="pathway">
    <text evidence="1">Cofactor biosynthesis; coenzyme A biosynthesis; CoA from (R)-pantothenate: step 1/5.</text>
</comment>
<comment type="subunit">
    <text evidence="1">Homodimer.</text>
</comment>
<comment type="subcellular location">
    <subcellularLocation>
        <location evidence="1">Cytoplasm</location>
    </subcellularLocation>
</comment>
<comment type="similarity">
    <text evidence="1">Belongs to the type II pantothenate kinase family.</text>
</comment>
<reference key="1">
    <citation type="journal article" date="2006" name="J. Bacteriol.">
        <title>Pathogenomic sequence analysis of Bacillus cereus and Bacillus thuringiensis isolates closely related to Bacillus anthracis.</title>
        <authorList>
            <person name="Han C.S."/>
            <person name="Xie G."/>
            <person name="Challacombe J.F."/>
            <person name="Altherr M.R."/>
            <person name="Bhotika S.S."/>
            <person name="Bruce D."/>
            <person name="Campbell C.S."/>
            <person name="Campbell M.L."/>
            <person name="Chen J."/>
            <person name="Chertkov O."/>
            <person name="Cleland C."/>
            <person name="Dimitrijevic M."/>
            <person name="Doggett N.A."/>
            <person name="Fawcett J.J."/>
            <person name="Glavina T."/>
            <person name="Goodwin L.A."/>
            <person name="Hill K.K."/>
            <person name="Hitchcock P."/>
            <person name="Jackson P.J."/>
            <person name="Keim P."/>
            <person name="Kewalramani A.R."/>
            <person name="Longmire J."/>
            <person name="Lucas S."/>
            <person name="Malfatti S."/>
            <person name="McMurry K."/>
            <person name="Meincke L.J."/>
            <person name="Misra M."/>
            <person name="Moseman B.L."/>
            <person name="Mundt M."/>
            <person name="Munk A.C."/>
            <person name="Okinaka R.T."/>
            <person name="Parson-Quintana B."/>
            <person name="Reilly L.P."/>
            <person name="Richardson P."/>
            <person name="Robinson D.L."/>
            <person name="Rubin E."/>
            <person name="Saunders E."/>
            <person name="Tapia R."/>
            <person name="Tesmer J.G."/>
            <person name="Thayer N."/>
            <person name="Thompson L.S."/>
            <person name="Tice H."/>
            <person name="Ticknor L.O."/>
            <person name="Wills P.L."/>
            <person name="Brettin T.S."/>
            <person name="Gilna P."/>
        </authorList>
    </citation>
    <scope>NUCLEOTIDE SEQUENCE [LARGE SCALE GENOMIC DNA]</scope>
    <source>
        <strain>97-27</strain>
    </source>
</reference>
<name>COAW_BACHK</name>
<dbReference type="EC" id="2.7.1.33" evidence="1"/>
<dbReference type="EMBL" id="AE017355">
    <property type="protein sequence ID" value="AAT61796.1"/>
    <property type="molecule type" value="Genomic_DNA"/>
</dbReference>
<dbReference type="RefSeq" id="WP_000446246.1">
    <property type="nucleotide sequence ID" value="NC_005957.1"/>
</dbReference>
<dbReference type="RefSeq" id="YP_036976.1">
    <property type="nucleotide sequence ID" value="NC_005957.1"/>
</dbReference>
<dbReference type="SMR" id="Q6HHK0"/>
<dbReference type="KEGG" id="btk:BT9727_2652"/>
<dbReference type="PATRIC" id="fig|281309.8.peg.2810"/>
<dbReference type="HOGENOM" id="CLU_087521_1_0_9"/>
<dbReference type="UniPathway" id="UPA00241">
    <property type="reaction ID" value="UER00352"/>
</dbReference>
<dbReference type="Proteomes" id="UP000001301">
    <property type="component" value="Chromosome"/>
</dbReference>
<dbReference type="GO" id="GO:0005829">
    <property type="term" value="C:cytosol"/>
    <property type="evidence" value="ECO:0007669"/>
    <property type="project" value="TreeGrafter"/>
</dbReference>
<dbReference type="GO" id="GO:0005524">
    <property type="term" value="F:ATP binding"/>
    <property type="evidence" value="ECO:0007669"/>
    <property type="project" value="UniProtKB-UniRule"/>
</dbReference>
<dbReference type="GO" id="GO:0004594">
    <property type="term" value="F:pantothenate kinase activity"/>
    <property type="evidence" value="ECO:0007669"/>
    <property type="project" value="UniProtKB-UniRule"/>
</dbReference>
<dbReference type="GO" id="GO:0015937">
    <property type="term" value="P:coenzyme A biosynthetic process"/>
    <property type="evidence" value="ECO:0007669"/>
    <property type="project" value="UniProtKB-UniRule"/>
</dbReference>
<dbReference type="CDD" id="cd24085">
    <property type="entry name" value="ASKHA_NBD_PanK-II_bac"/>
    <property type="match status" value="1"/>
</dbReference>
<dbReference type="Gene3D" id="3.30.420.40">
    <property type="match status" value="3"/>
</dbReference>
<dbReference type="HAMAP" id="MF_01273">
    <property type="entry name" value="Pantothen_kinase_2"/>
    <property type="match status" value="1"/>
</dbReference>
<dbReference type="InterPro" id="IPR043129">
    <property type="entry name" value="ATPase_NBD"/>
</dbReference>
<dbReference type="InterPro" id="IPR004567">
    <property type="entry name" value="Type_II_PanK"/>
</dbReference>
<dbReference type="InterPro" id="IPR011602">
    <property type="entry name" value="Type_II_PanK_bac"/>
</dbReference>
<dbReference type="NCBIfam" id="TIGR00555">
    <property type="entry name" value="panK_eukar"/>
    <property type="match status" value="1"/>
</dbReference>
<dbReference type="NCBIfam" id="NF009842">
    <property type="entry name" value="PRK13317.1"/>
    <property type="match status" value="1"/>
</dbReference>
<dbReference type="PANTHER" id="PTHR12280:SF20">
    <property type="entry name" value="4'-PHOSPHOPANTETHEINE PHOSPHATASE"/>
    <property type="match status" value="1"/>
</dbReference>
<dbReference type="PANTHER" id="PTHR12280">
    <property type="entry name" value="PANTOTHENATE KINASE"/>
    <property type="match status" value="1"/>
</dbReference>
<dbReference type="Pfam" id="PF03630">
    <property type="entry name" value="Fumble"/>
    <property type="match status" value="1"/>
</dbReference>
<dbReference type="PIRSF" id="PIRSF036940">
    <property type="entry name" value="PanK_bac_aCoA"/>
    <property type="match status" value="1"/>
</dbReference>
<dbReference type="SUPFAM" id="SSF53067">
    <property type="entry name" value="Actin-like ATPase domain"/>
    <property type="match status" value="1"/>
</dbReference>
<accession>Q6HHK0</accession>
<organism>
    <name type="scientific">Bacillus thuringiensis subsp. konkukian (strain 97-27)</name>
    <dbReference type="NCBI Taxonomy" id="281309"/>
    <lineage>
        <taxon>Bacteria</taxon>
        <taxon>Bacillati</taxon>
        <taxon>Bacillota</taxon>
        <taxon>Bacilli</taxon>
        <taxon>Bacillales</taxon>
        <taxon>Bacillaceae</taxon>
        <taxon>Bacillus</taxon>
        <taxon>Bacillus cereus group</taxon>
    </lineage>
</organism>
<keyword id="KW-0067">ATP-binding</keyword>
<keyword id="KW-0173">Coenzyme A biosynthesis</keyword>
<keyword id="KW-0963">Cytoplasm</keyword>
<keyword id="KW-0418">Kinase</keyword>
<keyword id="KW-0547">Nucleotide-binding</keyword>
<keyword id="KW-0808">Transferase</keyword>